<organismHost>
    <name type="scientific">Cestrum parqui</name>
    <dbReference type="NCBI Taxonomy" id="142762"/>
</organismHost>
<keyword id="KW-1185">Reference proteome</keyword>
<evidence type="ECO:0000256" key="1">
    <source>
        <dbReference type="SAM" id="MobiDB-lite"/>
    </source>
</evidence>
<accession>Q7TD12</accession>
<name>Y1A_CYLCV</name>
<sequence length="89" mass="10524">MSQERVDKLRKLRIEFEGIIQRMEVAKNLLRELEETTDRVRVDRLQMEVGFLRDYADINCMIEKDRIKEQSSSSSATRTTQEPSLHLPD</sequence>
<reference key="1">
    <citation type="journal article" date="2003" name="J. Gen. Virol.">
        <title>Characterization of Cestrum yellow leaf curling virus: a new member of the family Caulimoviridae.</title>
        <authorList>
            <person name="Stavolone L."/>
            <person name="Ragozzino A."/>
            <person name="Hohn T."/>
        </authorList>
    </citation>
    <scope>NUCLEOTIDE SEQUENCE [GENOMIC DNA]</scope>
</reference>
<gene>
    <name type="ORF">ORF Ia</name>
</gene>
<dbReference type="EMBL" id="AF364175">
    <property type="protein sequence ID" value="AAP78920.1"/>
    <property type="molecule type" value="Genomic_DNA"/>
</dbReference>
<dbReference type="RefSeq" id="NP_861412.1">
    <property type="nucleotide sequence ID" value="NC_004324.3"/>
</dbReference>
<dbReference type="SMR" id="Q7TD12"/>
<dbReference type="KEGG" id="vg:1732957"/>
<dbReference type="Proteomes" id="UP000007763">
    <property type="component" value="Genome"/>
</dbReference>
<protein>
    <recommendedName>
        <fullName>Uncharacterized protein 1a</fullName>
    </recommendedName>
</protein>
<feature type="chain" id="PRO_0000317783" description="Uncharacterized protein 1a">
    <location>
        <begin position="1"/>
        <end position="89"/>
    </location>
</feature>
<feature type="region of interest" description="Disordered" evidence="1">
    <location>
        <begin position="66"/>
        <end position="89"/>
    </location>
</feature>
<proteinExistence type="predicted"/>
<organism>
    <name type="scientific">Cestrum yellow leaf curling virus</name>
    <name type="common">CmYLCV</name>
    <dbReference type="NCBI Taxonomy" id="175814"/>
    <lineage>
        <taxon>Viruses</taxon>
        <taxon>Riboviria</taxon>
        <taxon>Pararnavirae</taxon>
        <taxon>Artverviricota</taxon>
        <taxon>Revtraviricetes</taxon>
        <taxon>Ortervirales</taxon>
        <taxon>Caulimoviridae</taxon>
        <taxon>Soymovirus</taxon>
        <taxon>Soymovirus crispocestri</taxon>
    </lineage>
</organism>